<feature type="chain" id="PRO_0000432147" description="CRISPR pre-crRNA endoribonuclease Cas5d">
    <location>
        <begin position="1"/>
        <end position="229"/>
    </location>
</feature>
<feature type="mutagenesis site" description="No longer binds pre-crRNA." evidence="1">
    <original>E</original>
    <variation>Q</variation>
    <location>
        <position position="23"/>
    </location>
</feature>
<feature type="mutagenesis site" description="No change in binding or cleavage of pre-crRNA." evidence="1">
    <original>Y</original>
    <variation>F</variation>
    <location>
        <position position="27"/>
    </location>
</feature>
<sequence length="229" mass="26367">MARLKVKVWGEYACFSRPEFKVERVSYPVPTPSAARGLLEAIFWKPEFRYEVRRIGVLRLGTPFALLRNEVGNRMGAKPFFVEDARQQRTSLVLKDVAYLVEADMVLRPHATDPLPKYLEQFERRLKKGQYHHTPYLGTREFPAYFSPPDGEVPDGGLNLDLGPMLFDLAFVEDPGRPELTFKRPGRGEVQGYALPLFFHARIREGWLEVPAEKYQELYRLEEGHAKGA</sequence>
<organism>
    <name type="scientific">Thermus thermophilus (strain ATCC BAA-163 / DSM 7039 / HB27)</name>
    <dbReference type="NCBI Taxonomy" id="262724"/>
    <lineage>
        <taxon>Bacteria</taxon>
        <taxon>Thermotogati</taxon>
        <taxon>Deinococcota</taxon>
        <taxon>Deinococci</taxon>
        <taxon>Thermales</taxon>
        <taxon>Thermaceae</taxon>
        <taxon>Thermus</taxon>
    </lineage>
</organism>
<name>CAS5D_THET2</name>
<protein>
    <recommendedName>
        <fullName evidence="2">CRISPR pre-crRNA endoribonuclease Cas5d</fullName>
        <ecNumber>3.1.-.-</ecNumber>
    </recommendedName>
    <alternativeName>
        <fullName>Pre-crRNA processing endonuclease Cas5d</fullName>
    </alternativeName>
</protein>
<gene>
    <name evidence="2" type="primary">cas5d</name>
    <name type="ordered locus">TT_P0133</name>
</gene>
<proteinExistence type="evidence at protein level"/>
<geneLocation type="plasmid">
    <name>pTT27</name>
</geneLocation>
<evidence type="ECO:0000269" key="1">
    <source>
    </source>
</evidence>
<evidence type="ECO:0000303" key="2">
    <source>
    </source>
</evidence>
<evidence type="ECO:0000305" key="3"/>
<accession>Q746C2</accession>
<dbReference type="EC" id="3.1.-.-"/>
<dbReference type="EMBL" id="AE017222">
    <property type="protein sequence ID" value="AAS82463.1"/>
    <property type="molecule type" value="Genomic_DNA"/>
</dbReference>
<dbReference type="RefSeq" id="WP_011174431.1">
    <property type="nucleotide sequence ID" value="NC_005838.1"/>
</dbReference>
<dbReference type="SMR" id="Q746C2"/>
<dbReference type="KEGG" id="tth:TT_P0133"/>
<dbReference type="eggNOG" id="ENOG502Z82V">
    <property type="taxonomic scope" value="Bacteria"/>
</dbReference>
<dbReference type="HOGENOM" id="CLU_086014_0_0_0"/>
<dbReference type="OrthoDB" id="5621871at2"/>
<dbReference type="Proteomes" id="UP000000592">
    <property type="component" value="Plasmid pTT27"/>
</dbReference>
<dbReference type="GO" id="GO:0004519">
    <property type="term" value="F:endonuclease activity"/>
    <property type="evidence" value="ECO:0007669"/>
    <property type="project" value="UniProtKB-KW"/>
</dbReference>
<dbReference type="GO" id="GO:0003723">
    <property type="term" value="F:RNA binding"/>
    <property type="evidence" value="ECO:0007669"/>
    <property type="project" value="UniProtKB-KW"/>
</dbReference>
<dbReference type="GO" id="GO:0051607">
    <property type="term" value="P:defense response to virus"/>
    <property type="evidence" value="ECO:0007669"/>
    <property type="project" value="UniProtKB-KW"/>
</dbReference>
<dbReference type="GO" id="GO:0043571">
    <property type="term" value="P:maintenance of CRISPR repeat elements"/>
    <property type="evidence" value="ECO:0007669"/>
    <property type="project" value="InterPro"/>
</dbReference>
<dbReference type="CDD" id="cd09651">
    <property type="entry name" value="Cas5_I-C"/>
    <property type="match status" value="1"/>
</dbReference>
<dbReference type="Gene3D" id="3.30.70.2660">
    <property type="match status" value="1"/>
</dbReference>
<dbReference type="InterPro" id="IPR021124">
    <property type="entry name" value="CRISPR-assoc_prot_Cas5"/>
</dbReference>
<dbReference type="InterPro" id="IPR013422">
    <property type="entry name" value="CRISPR-assoc_prot_Cas5_N"/>
</dbReference>
<dbReference type="InterPro" id="IPR010155">
    <property type="entry name" value="CRISPR-assoc_prot_Cas5d"/>
</dbReference>
<dbReference type="NCBIfam" id="TIGR01876">
    <property type="entry name" value="cas_Cas5d"/>
    <property type="match status" value="1"/>
</dbReference>
<dbReference type="NCBIfam" id="TIGR02593">
    <property type="entry name" value="CRISPR_cas5"/>
    <property type="match status" value="1"/>
</dbReference>
<dbReference type="Pfam" id="PF09704">
    <property type="entry name" value="Cas_Cas5d"/>
    <property type="match status" value="1"/>
</dbReference>
<dbReference type="PIRSF" id="PIRSF029950">
    <property type="entry name" value="Cas_CT1134"/>
    <property type="match status" value="1"/>
</dbReference>
<reference key="1">
    <citation type="journal article" date="2004" name="Nat. Biotechnol.">
        <title>The genome sequence of the extreme thermophile Thermus thermophilus.</title>
        <authorList>
            <person name="Henne A."/>
            <person name="Brueggemann H."/>
            <person name="Raasch C."/>
            <person name="Wiezer A."/>
            <person name="Hartsch T."/>
            <person name="Liesegang H."/>
            <person name="Johann A."/>
            <person name="Lienard T."/>
            <person name="Gohl O."/>
            <person name="Martinez-Arias R."/>
            <person name="Jacobi C."/>
            <person name="Starkuviene V."/>
            <person name="Schlenczeck S."/>
            <person name="Dencker S."/>
            <person name="Huber R."/>
            <person name="Klenk H.-P."/>
            <person name="Kramer W."/>
            <person name="Merkl R."/>
            <person name="Gottschalk G."/>
            <person name="Fritz H.-J."/>
        </authorList>
    </citation>
    <scope>NUCLEOTIDE SEQUENCE [LARGE SCALE GENOMIC DNA]</scope>
    <source>
        <strain>ATCC BAA-163 / DSM 7039 / HB27</strain>
    </source>
</reference>
<reference key="2">
    <citation type="journal article" date="2012" name="RNA">
        <title>Cas5d processes pre-crRNA and is a member of a larger family of CRISPR RNA endonucleases.</title>
        <authorList>
            <person name="Garside E.L."/>
            <person name="Schellenberg M.J."/>
            <person name="Gesner E.M."/>
            <person name="Bonanno J.B."/>
            <person name="Sauder J.M."/>
            <person name="Burley S.K."/>
            <person name="Almo S.C."/>
            <person name="Mehta G."/>
            <person name="MacMillan A.M."/>
        </authorList>
    </citation>
    <scope>FUNCTION</scope>
    <scope>PROBABLE REACTION MECHANISM</scope>
    <scope>COFACTOR</scope>
    <scope>RNA-BINDING</scope>
    <scope>MUTAGENESIS OF GLU-23 AND TYR-27</scope>
    <source>
        <strain>ATCC BAA-163 / DSM 7039 / HB27</strain>
    </source>
</reference>
<comment type="function">
    <text evidence="1">CRISPR (clustered regularly interspaced short palindromic repeat) is an adaptive immune system that provides protection against mobile genetic elements (viruses, transposable elements and conjugative plasmids). CRISPR clusters contain spacers, sequences complementary to antecedent mobile elements, and target invading nucleic acids. CRISPR clusters are transcribed and processed into CRISPR RNA (crRNA). This protein is a sequence-specific endonuclease that cleaves pre-crRNA into mature crRNA, possibly by an intramolecular attack of the 2'-hydroxyl group of G26 on the scissile phosphodiester, cutting the precursor 3' to G26 residue yielding 5'-hydroxyl and 2' and/or 3' ends lacking a hydroxyl group (perhaps a 2'/3' cyclic phosphodiester). Requires between 4 and 8 nt downstream of the cleavage site for both binding and cleavage of pre-crRNA. Substitution with dG at this position abolishes cleavage but not RNA binding. Does not cleave pre-crRNA associated with the M.succiniciproducens strain MBEL55E Cas5 protein (AC Q65TW5) CRISPR locus.</text>
</comment>
<comment type="cofactor">
    <text evidence="1">Does not require a metal cofactor.</text>
</comment>
<comment type="similarity">
    <text evidence="3">Belongs to the CRISPR-associated protein Cas5 family. Subtype I-C/Dvulg subfamily.</text>
</comment>
<keyword id="KW-0051">Antiviral defense</keyword>
<keyword id="KW-0255">Endonuclease</keyword>
<keyword id="KW-0378">Hydrolase</keyword>
<keyword id="KW-0540">Nuclease</keyword>
<keyword id="KW-0614">Plasmid</keyword>
<keyword id="KW-0694">RNA-binding</keyword>